<keyword id="KW-0044">Antibiotic</keyword>
<keyword id="KW-0929">Antimicrobial</keyword>
<keyword id="KW-0165">Cleavage on pair of basic residues</keyword>
<keyword id="KW-0211">Defensin</keyword>
<keyword id="KW-1015">Disulfide bond</keyword>
<keyword id="KW-0278">Fertilization</keyword>
<keyword id="KW-1185">Reference proteome</keyword>
<keyword id="KW-0964">Secreted</keyword>
<keyword id="KW-0732">Signal</keyword>
<organism>
    <name type="scientific">Pan troglodytes</name>
    <name type="common">Chimpanzee</name>
    <dbReference type="NCBI Taxonomy" id="9598"/>
    <lineage>
        <taxon>Eukaryota</taxon>
        <taxon>Metazoa</taxon>
        <taxon>Chordata</taxon>
        <taxon>Craniata</taxon>
        <taxon>Vertebrata</taxon>
        <taxon>Euteleostomi</taxon>
        <taxon>Mammalia</taxon>
        <taxon>Eutheria</taxon>
        <taxon>Euarchontoglires</taxon>
        <taxon>Primates</taxon>
        <taxon>Haplorrhini</taxon>
        <taxon>Catarrhini</taxon>
        <taxon>Hominidae</taxon>
        <taxon>Pan</taxon>
    </lineage>
</organism>
<protein>
    <recommendedName>
        <fullName>Beta-defensin 126</fullName>
    </recommendedName>
    <alternativeName>
        <fullName>Defensin, beta 126</fullName>
    </alternativeName>
</protein>
<name>DB126_PANTR</name>
<evidence type="ECO:0000250" key="1">
    <source>
        <dbReference type="UniProtKB" id="P59665"/>
    </source>
</evidence>
<evidence type="ECO:0000250" key="2">
    <source>
        <dbReference type="UniProtKB" id="Q9BEE3"/>
    </source>
</evidence>
<evidence type="ECO:0000250" key="3">
    <source>
        <dbReference type="UniProtKB" id="Q9BYW3"/>
    </source>
</evidence>
<evidence type="ECO:0000255" key="4"/>
<evidence type="ECO:0000305" key="5"/>
<comment type="function">
    <text evidence="2 3">Highly glycosylated atypical beta-defensin involved in several aspects of sperm function. Facilitates sperm transport in the female reproductive tract and contributes to sperm protection against immunodetection; both functions are probably implicating the negative surface charge provided by its O-linked oligosaccharides in the sperm glycocalyx. Involved in binding of sperm to oviductal epithelial cells to form a sperm reservoir until ovulation. Release from the sperm surface during capacitation and ovaluation by an elevation of oviductal fluid pH is unmasking other surface components and allows sperm to penetrate the cumulus matrix and bind to the zona pellucida of the oocyte. In vitro has antimicrobial activity and may inhibit LPS-mediated inflammation (By similarity).</text>
</comment>
<comment type="subunit">
    <text evidence="2">Homodimer or homooligomer; disulfide-linked.</text>
</comment>
<comment type="subcellular location">
    <subcellularLocation>
        <location evidence="2">Secreted</location>
    </subcellularLocation>
    <text evidence="2">Secreted by epididymal cells and is absorbed to the surface of sperm during transit through the epididymis.</text>
</comment>
<comment type="PTM">
    <text evidence="2 3">O-glycosylated; glycans contain alpha(2,3)-linked sialic acids (By similarity).</text>
</comment>
<comment type="similarity">
    <text evidence="5">Belongs to the beta-defensin family.</text>
</comment>
<sequence>MKSLLFTLAVFMLLAQLVSGNWYVKKCLNDVGICKKKCKPGEMHIKNGWATCGKQRDCCVPADRRANYPAFCVQTKTTRTSTVTAKTTLMVTTASMSSMAPTPVSPTG</sequence>
<accession>Q30KK2</accession>
<accession>A4H242</accession>
<dbReference type="EMBL" id="DQ012078">
    <property type="protein sequence ID" value="AAY59808.1"/>
    <property type="molecule type" value="mRNA"/>
</dbReference>
<dbReference type="EMBL" id="AM410147">
    <property type="protein sequence ID" value="CAL68957.1"/>
    <property type="molecule type" value="Genomic_DNA"/>
</dbReference>
<dbReference type="RefSeq" id="NP_001123243.1">
    <property type="nucleotide sequence ID" value="NM_001129771.1"/>
</dbReference>
<dbReference type="STRING" id="9598.ENSPTRP00000022490"/>
<dbReference type="PaxDb" id="9598-ENSPTRP00000022490"/>
<dbReference type="GeneID" id="458023"/>
<dbReference type="KEGG" id="ptr:458023"/>
<dbReference type="CTD" id="81623"/>
<dbReference type="eggNOG" id="ENOG502TDX7">
    <property type="taxonomic scope" value="Eukaryota"/>
</dbReference>
<dbReference type="InParanoid" id="Q30KK2"/>
<dbReference type="OrthoDB" id="15851at9604"/>
<dbReference type="Proteomes" id="UP000002277">
    <property type="component" value="Unplaced"/>
</dbReference>
<dbReference type="GO" id="GO:0005576">
    <property type="term" value="C:extracellular region"/>
    <property type="evidence" value="ECO:0007669"/>
    <property type="project" value="UniProtKB-SubCell"/>
</dbReference>
<dbReference type="GO" id="GO:0050829">
    <property type="term" value="P:defense response to Gram-negative bacterium"/>
    <property type="evidence" value="ECO:0007669"/>
    <property type="project" value="UniProtKB-ARBA"/>
</dbReference>
<dbReference type="GO" id="GO:0007338">
    <property type="term" value="P:single fertilization"/>
    <property type="evidence" value="ECO:0007669"/>
    <property type="project" value="UniProtKB-KW"/>
</dbReference>
<dbReference type="InterPro" id="IPR050544">
    <property type="entry name" value="Beta-defensin"/>
</dbReference>
<dbReference type="PANTHER" id="PTHR15001:SF3">
    <property type="entry name" value="BETA-DEFENSIN 123"/>
    <property type="match status" value="1"/>
</dbReference>
<dbReference type="PANTHER" id="PTHR15001">
    <property type="entry name" value="BETA-DEFENSIN 123-RELATED"/>
    <property type="match status" value="1"/>
</dbReference>
<proteinExistence type="inferred from homology"/>
<gene>
    <name type="primary">DEFB126</name>
</gene>
<feature type="signal peptide" evidence="4">
    <location>
        <begin position="1"/>
        <end position="20"/>
    </location>
</feature>
<feature type="chain" id="PRO_0000436302" description="Beta-defensin 126">
    <location>
        <begin position="21"/>
        <end position="108"/>
    </location>
</feature>
<feature type="region of interest" description="In vitro binds to LPS, mediates antimicrobial activity and inhibits LPS-mediated inflammation" evidence="3">
    <location>
        <begin position="21"/>
        <end position="63"/>
    </location>
</feature>
<feature type="disulfide bond" evidence="1">
    <location>
        <begin position="27"/>
        <end position="58"/>
    </location>
</feature>
<feature type="disulfide bond" evidence="1">
    <location>
        <begin position="34"/>
        <end position="52"/>
    </location>
</feature>
<feature type="disulfide bond" evidence="1">
    <location>
        <begin position="38"/>
        <end position="59"/>
    </location>
</feature>
<feature type="disulfide bond" description="Interchain" evidence="2">
    <location>
        <position position="72"/>
    </location>
</feature>
<feature type="sequence conflict" description="In Ref. 1; AAY59808." evidence="5" ref="1">
    <original>K</original>
    <variation>R</variation>
    <location>
        <position position="86"/>
    </location>
</feature>
<reference key="1">
    <citation type="journal article" date="2005" name="Physiol. Genomics">
        <title>Cross-species analysis of the mammalian beta-defensin gene family: presence of syntenic gene clusters and preferential expression in the male reproductive tract.</title>
        <authorList>
            <person name="Patil A.A."/>
            <person name="Cai Y."/>
            <person name="Sang Y."/>
            <person name="Blecha F."/>
            <person name="Zhang G."/>
        </authorList>
    </citation>
    <scope>NUCLEOTIDE SEQUENCE [MRNA]</scope>
</reference>
<reference key="2">
    <citation type="submission" date="2006-11" db="EMBL/GenBank/DDBJ databases">
        <title>Evolution and sequence variation of human beta-defensin genes.</title>
        <authorList>
            <person name="Hollox E.J."/>
            <person name="Armour J.A.L."/>
        </authorList>
    </citation>
    <scope>NUCLEOTIDE SEQUENCE [GENOMIC DNA]</scope>
</reference>